<proteinExistence type="inferred from homology"/>
<feature type="chain" id="PRO_0000241713" description="Ubiquinone biosynthesis O-methyltransferase">
    <location>
        <begin position="1"/>
        <end position="261"/>
    </location>
</feature>
<feature type="region of interest" description="Disordered" evidence="2">
    <location>
        <begin position="1"/>
        <end position="22"/>
    </location>
</feature>
<feature type="compositionally biased region" description="Low complexity" evidence="2">
    <location>
        <begin position="8"/>
        <end position="18"/>
    </location>
</feature>
<feature type="binding site" evidence="1">
    <location>
        <position position="55"/>
    </location>
    <ligand>
        <name>S-adenosyl-L-methionine</name>
        <dbReference type="ChEBI" id="CHEBI:59789"/>
    </ligand>
</feature>
<feature type="binding site" evidence="1">
    <location>
        <position position="86"/>
    </location>
    <ligand>
        <name>S-adenosyl-L-methionine</name>
        <dbReference type="ChEBI" id="CHEBI:59789"/>
    </ligand>
</feature>
<feature type="binding site" evidence="1">
    <location>
        <position position="107"/>
    </location>
    <ligand>
        <name>S-adenosyl-L-methionine</name>
        <dbReference type="ChEBI" id="CHEBI:59789"/>
    </ligand>
</feature>
<feature type="binding site" evidence="1">
    <location>
        <position position="149"/>
    </location>
    <ligand>
        <name>S-adenosyl-L-methionine</name>
        <dbReference type="ChEBI" id="CHEBI:59789"/>
    </ligand>
</feature>
<comment type="function">
    <text evidence="1">O-methyltransferase that catalyzes the 2 O-methylation steps in the ubiquinone biosynthetic pathway.</text>
</comment>
<comment type="catalytic activity">
    <reaction evidence="1">
        <text>a 3-demethylubiquinol + S-adenosyl-L-methionine = a ubiquinol + S-adenosyl-L-homocysteine + H(+)</text>
        <dbReference type="Rhea" id="RHEA:44380"/>
        <dbReference type="Rhea" id="RHEA-COMP:9566"/>
        <dbReference type="Rhea" id="RHEA-COMP:10914"/>
        <dbReference type="ChEBI" id="CHEBI:15378"/>
        <dbReference type="ChEBI" id="CHEBI:17976"/>
        <dbReference type="ChEBI" id="CHEBI:57856"/>
        <dbReference type="ChEBI" id="CHEBI:59789"/>
        <dbReference type="ChEBI" id="CHEBI:84422"/>
        <dbReference type="EC" id="2.1.1.64"/>
    </reaction>
</comment>
<comment type="catalytic activity">
    <reaction evidence="1">
        <text>a 3-(all-trans-polyprenyl)benzene-1,2-diol + S-adenosyl-L-methionine = a 2-methoxy-6-(all-trans-polyprenyl)phenol + S-adenosyl-L-homocysteine + H(+)</text>
        <dbReference type="Rhea" id="RHEA:31411"/>
        <dbReference type="Rhea" id="RHEA-COMP:9550"/>
        <dbReference type="Rhea" id="RHEA-COMP:9551"/>
        <dbReference type="ChEBI" id="CHEBI:15378"/>
        <dbReference type="ChEBI" id="CHEBI:57856"/>
        <dbReference type="ChEBI" id="CHEBI:59789"/>
        <dbReference type="ChEBI" id="CHEBI:62729"/>
        <dbReference type="ChEBI" id="CHEBI:62731"/>
        <dbReference type="EC" id="2.1.1.222"/>
    </reaction>
</comment>
<comment type="pathway">
    <text evidence="1">Cofactor biosynthesis; ubiquinone biosynthesis.</text>
</comment>
<comment type="similarity">
    <text evidence="1">Belongs to the methyltransferase superfamily. UbiG/COQ3 family.</text>
</comment>
<gene>
    <name evidence="1" type="primary">ubiG</name>
    <name type="ordered locus">Nwi_0381</name>
</gene>
<reference key="1">
    <citation type="journal article" date="2006" name="Appl. Environ. Microbiol.">
        <title>Genome sequence of the chemolithoautotrophic nitrite-oxidizing bacterium Nitrobacter winogradskyi Nb-255.</title>
        <authorList>
            <person name="Starkenburg S.R."/>
            <person name="Chain P.S.G."/>
            <person name="Sayavedra-Soto L.A."/>
            <person name="Hauser L."/>
            <person name="Land M.L."/>
            <person name="Larimer F.W."/>
            <person name="Malfatti S.A."/>
            <person name="Klotz M.G."/>
            <person name="Bottomley P.J."/>
            <person name="Arp D.J."/>
            <person name="Hickey W.J."/>
        </authorList>
    </citation>
    <scope>NUCLEOTIDE SEQUENCE [LARGE SCALE GENOMIC DNA]</scope>
    <source>
        <strain>ATCC 25391 / DSM 10237 / CIP 104748 / NCIMB 11846 / Nb-255</strain>
    </source>
</reference>
<organism>
    <name type="scientific">Nitrobacter winogradskyi (strain ATCC 25391 / DSM 10237 / CIP 104748 / NCIMB 11846 / Nb-255)</name>
    <dbReference type="NCBI Taxonomy" id="323098"/>
    <lineage>
        <taxon>Bacteria</taxon>
        <taxon>Pseudomonadati</taxon>
        <taxon>Pseudomonadota</taxon>
        <taxon>Alphaproteobacteria</taxon>
        <taxon>Hyphomicrobiales</taxon>
        <taxon>Nitrobacteraceae</taxon>
        <taxon>Nitrobacter</taxon>
    </lineage>
</organism>
<sequence length="261" mass="28745">MTMQVDPSANSSAASSAAPGTTVDRAEIEKFSKLSQEWWDPTGKMAPLHRINPLRLQFIRDAACRKFDRNARSLNCLAGLRLLDIGCGAGLLCEPFTRLGAQVIGVDPSASNIAAAKLHAEKAHLSIDYRCTTVEDMDVRERFDIILAMEVVEHVADVGLFLDRCAAMLKPGGMMAASTLNRNWKSFALGIVAAEYVLRWLPRGTHQWDKFVTPDELARHFERNGLGITEQSGVVYSPFGDRWSLSSDMDVNYMVVAEAVG</sequence>
<accession>Q3SVP3</accession>
<keyword id="KW-0489">Methyltransferase</keyword>
<keyword id="KW-1185">Reference proteome</keyword>
<keyword id="KW-0949">S-adenosyl-L-methionine</keyword>
<keyword id="KW-0808">Transferase</keyword>
<keyword id="KW-0831">Ubiquinone biosynthesis</keyword>
<dbReference type="EC" id="2.1.1.222" evidence="1"/>
<dbReference type="EC" id="2.1.1.64" evidence="1"/>
<dbReference type="EMBL" id="CP000115">
    <property type="protein sequence ID" value="ABA03648.1"/>
    <property type="molecule type" value="Genomic_DNA"/>
</dbReference>
<dbReference type="RefSeq" id="WP_011313712.1">
    <property type="nucleotide sequence ID" value="NC_007406.1"/>
</dbReference>
<dbReference type="SMR" id="Q3SVP3"/>
<dbReference type="STRING" id="323098.Nwi_0381"/>
<dbReference type="KEGG" id="nwi:Nwi_0381"/>
<dbReference type="eggNOG" id="COG2227">
    <property type="taxonomic scope" value="Bacteria"/>
</dbReference>
<dbReference type="HOGENOM" id="CLU_042432_0_0_5"/>
<dbReference type="OrthoDB" id="9801538at2"/>
<dbReference type="UniPathway" id="UPA00232"/>
<dbReference type="Proteomes" id="UP000002531">
    <property type="component" value="Chromosome"/>
</dbReference>
<dbReference type="GO" id="GO:0102208">
    <property type="term" value="F:2-polyprenyl-6-hydroxyphenol methylase activity"/>
    <property type="evidence" value="ECO:0007669"/>
    <property type="project" value="UniProtKB-EC"/>
</dbReference>
<dbReference type="GO" id="GO:0061542">
    <property type="term" value="F:3-demethylubiquinol 3-O-methyltransferase activity"/>
    <property type="evidence" value="ECO:0007669"/>
    <property type="project" value="UniProtKB-UniRule"/>
</dbReference>
<dbReference type="GO" id="GO:0010420">
    <property type="term" value="F:polyprenyldihydroxybenzoate methyltransferase activity"/>
    <property type="evidence" value="ECO:0007669"/>
    <property type="project" value="InterPro"/>
</dbReference>
<dbReference type="GO" id="GO:0032259">
    <property type="term" value="P:methylation"/>
    <property type="evidence" value="ECO:0007669"/>
    <property type="project" value="UniProtKB-KW"/>
</dbReference>
<dbReference type="CDD" id="cd02440">
    <property type="entry name" value="AdoMet_MTases"/>
    <property type="match status" value="1"/>
</dbReference>
<dbReference type="Gene3D" id="3.40.50.150">
    <property type="entry name" value="Vaccinia Virus protein VP39"/>
    <property type="match status" value="1"/>
</dbReference>
<dbReference type="HAMAP" id="MF_00472">
    <property type="entry name" value="UbiG"/>
    <property type="match status" value="1"/>
</dbReference>
<dbReference type="InterPro" id="IPR029063">
    <property type="entry name" value="SAM-dependent_MTases_sf"/>
</dbReference>
<dbReference type="InterPro" id="IPR010233">
    <property type="entry name" value="UbiG_MeTrfase"/>
</dbReference>
<dbReference type="NCBIfam" id="TIGR01983">
    <property type="entry name" value="UbiG"/>
    <property type="match status" value="1"/>
</dbReference>
<dbReference type="PANTHER" id="PTHR43464">
    <property type="entry name" value="METHYLTRANSFERASE"/>
    <property type="match status" value="1"/>
</dbReference>
<dbReference type="PANTHER" id="PTHR43464:SF19">
    <property type="entry name" value="UBIQUINONE BIOSYNTHESIS O-METHYLTRANSFERASE, MITOCHONDRIAL"/>
    <property type="match status" value="1"/>
</dbReference>
<dbReference type="Pfam" id="PF13489">
    <property type="entry name" value="Methyltransf_23"/>
    <property type="match status" value="1"/>
</dbReference>
<dbReference type="SUPFAM" id="SSF53335">
    <property type="entry name" value="S-adenosyl-L-methionine-dependent methyltransferases"/>
    <property type="match status" value="1"/>
</dbReference>
<name>UBIG_NITWN</name>
<evidence type="ECO:0000255" key="1">
    <source>
        <dbReference type="HAMAP-Rule" id="MF_00472"/>
    </source>
</evidence>
<evidence type="ECO:0000256" key="2">
    <source>
        <dbReference type="SAM" id="MobiDB-lite"/>
    </source>
</evidence>
<protein>
    <recommendedName>
        <fullName evidence="1">Ubiquinone biosynthesis O-methyltransferase</fullName>
    </recommendedName>
    <alternativeName>
        <fullName evidence="1">2-polyprenyl-6-hydroxyphenol methylase</fullName>
        <ecNumber evidence="1">2.1.1.222</ecNumber>
    </alternativeName>
    <alternativeName>
        <fullName evidence="1">3-demethylubiquinone 3-O-methyltransferase</fullName>
        <ecNumber evidence="1">2.1.1.64</ecNumber>
    </alternativeName>
</protein>